<gene>
    <name type="primary">FCER1G</name>
</gene>
<evidence type="ECO:0000250" key="1"/>
<evidence type="ECO:0000250" key="2">
    <source>
        <dbReference type="UniProtKB" id="P20411"/>
    </source>
</evidence>
<evidence type="ECO:0000250" key="3">
    <source>
        <dbReference type="UniProtKB" id="P20491"/>
    </source>
</evidence>
<evidence type="ECO:0000250" key="4">
    <source>
        <dbReference type="UniProtKB" id="P30273"/>
    </source>
</evidence>
<evidence type="ECO:0000255" key="5"/>
<evidence type="ECO:0000255" key="6">
    <source>
        <dbReference type="PROSITE-ProRule" id="PRU00379"/>
    </source>
</evidence>
<evidence type="ECO:0000305" key="7"/>
<proteinExistence type="inferred from homology"/>
<dbReference type="EMBL" id="AF485816">
    <property type="protein sequence ID" value="AAL92099.1"/>
    <property type="molecule type" value="mRNA"/>
</dbReference>
<dbReference type="RefSeq" id="XP_005541253.1">
    <property type="nucleotide sequence ID" value="XM_005541196.3"/>
</dbReference>
<dbReference type="SMR" id="Q8SPW1"/>
<dbReference type="STRING" id="9541.ENSMFAP00000024261"/>
<dbReference type="Ensembl" id="ENSMFAT00000032401.2">
    <property type="protein sequence ID" value="ENSMFAP00000024262.1"/>
    <property type="gene ID" value="ENSMFAG00000043727.2"/>
</dbReference>
<dbReference type="GeneID" id="102120026"/>
<dbReference type="KEGG" id="mcf:102120026"/>
<dbReference type="CTD" id="2207"/>
<dbReference type="VEuPathDB" id="HostDB:ENSMFAG00000043727"/>
<dbReference type="eggNOG" id="ENOG502S7XC">
    <property type="taxonomic scope" value="Eukaryota"/>
</dbReference>
<dbReference type="GeneTree" id="ENSGT00390000003894"/>
<dbReference type="OMA" id="CRLKIQM"/>
<dbReference type="OrthoDB" id="14103at314294"/>
<dbReference type="Proteomes" id="UP000233100">
    <property type="component" value="Chromosome 1"/>
</dbReference>
<dbReference type="Bgee" id="ENSMFAG00000043727">
    <property type="expression patterns" value="Expressed in bone marrow and 13 other cell types or tissues"/>
</dbReference>
<dbReference type="GO" id="GO:0009897">
    <property type="term" value="C:external side of plasma membrane"/>
    <property type="evidence" value="ECO:0007669"/>
    <property type="project" value="TreeGrafter"/>
</dbReference>
<dbReference type="GO" id="GO:0032998">
    <property type="term" value="C:Fc-epsilon receptor I complex"/>
    <property type="evidence" value="ECO:0007669"/>
    <property type="project" value="InterPro"/>
</dbReference>
<dbReference type="GO" id="GO:0033001">
    <property type="term" value="C:Fc-gamma receptor III complex"/>
    <property type="evidence" value="ECO:0000250"/>
    <property type="project" value="UniProtKB"/>
</dbReference>
<dbReference type="GO" id="GO:0019863">
    <property type="term" value="F:IgE binding"/>
    <property type="evidence" value="ECO:0007669"/>
    <property type="project" value="UniProtKB-KW"/>
</dbReference>
<dbReference type="GO" id="GO:0019767">
    <property type="term" value="F:IgE receptor activity"/>
    <property type="evidence" value="ECO:0007669"/>
    <property type="project" value="InterPro"/>
</dbReference>
<dbReference type="GO" id="GO:0019864">
    <property type="term" value="F:IgG binding"/>
    <property type="evidence" value="ECO:0007669"/>
    <property type="project" value="TreeGrafter"/>
</dbReference>
<dbReference type="GO" id="GO:0042803">
    <property type="term" value="F:protein homodimerization activity"/>
    <property type="evidence" value="ECO:0000250"/>
    <property type="project" value="UniProtKB"/>
</dbReference>
<dbReference type="GO" id="GO:0042590">
    <property type="term" value="P:antigen processing and presentation of exogenous peptide antigen via MHC class I"/>
    <property type="evidence" value="ECO:0007669"/>
    <property type="project" value="TreeGrafter"/>
</dbReference>
<dbReference type="GO" id="GO:0019886">
    <property type="term" value="P:antigen processing and presentation of exogenous peptide antigen via MHC class II"/>
    <property type="evidence" value="ECO:0007669"/>
    <property type="project" value="TreeGrafter"/>
</dbReference>
<dbReference type="GO" id="GO:0071404">
    <property type="term" value="P:cellular response to low-density lipoprotein particle stimulus"/>
    <property type="evidence" value="ECO:0000250"/>
    <property type="project" value="UniProtKB"/>
</dbReference>
<dbReference type="GO" id="GO:0042742">
    <property type="term" value="P:defense response to bacterium"/>
    <property type="evidence" value="ECO:0007669"/>
    <property type="project" value="TreeGrafter"/>
</dbReference>
<dbReference type="GO" id="GO:0002431">
    <property type="term" value="P:Fc receptor mediated stimulatory signaling pathway"/>
    <property type="evidence" value="ECO:0007669"/>
    <property type="project" value="TreeGrafter"/>
</dbReference>
<dbReference type="GO" id="GO:0038094">
    <property type="term" value="P:Fc-gamma receptor signaling pathway"/>
    <property type="evidence" value="ECO:0007669"/>
    <property type="project" value="TreeGrafter"/>
</dbReference>
<dbReference type="GO" id="GO:0016064">
    <property type="term" value="P:immunoglobulin mediated immune response"/>
    <property type="evidence" value="ECO:0007669"/>
    <property type="project" value="TreeGrafter"/>
</dbReference>
<dbReference type="GO" id="GO:0045087">
    <property type="term" value="P:innate immune response"/>
    <property type="evidence" value="ECO:0007669"/>
    <property type="project" value="UniProtKB-KW"/>
</dbReference>
<dbReference type="GO" id="GO:0038156">
    <property type="term" value="P:interleukin-3-mediated signaling pathway"/>
    <property type="evidence" value="ECO:0000250"/>
    <property type="project" value="UniProtKB"/>
</dbReference>
<dbReference type="GO" id="GO:0002283">
    <property type="term" value="P:neutrophil activation involved in immune response"/>
    <property type="evidence" value="ECO:0007669"/>
    <property type="project" value="TreeGrafter"/>
</dbReference>
<dbReference type="GO" id="GO:0030593">
    <property type="term" value="P:neutrophil chemotaxis"/>
    <property type="evidence" value="ECO:0007669"/>
    <property type="project" value="TreeGrafter"/>
</dbReference>
<dbReference type="GO" id="GO:0032753">
    <property type="term" value="P:positive regulation of interleukin-4 production"/>
    <property type="evidence" value="ECO:0000250"/>
    <property type="project" value="UniProtKB"/>
</dbReference>
<dbReference type="GO" id="GO:0050766">
    <property type="term" value="P:positive regulation of phagocytosis"/>
    <property type="evidence" value="ECO:0007669"/>
    <property type="project" value="TreeGrafter"/>
</dbReference>
<dbReference type="GO" id="GO:0031623">
    <property type="term" value="P:receptor internalization"/>
    <property type="evidence" value="ECO:0000250"/>
    <property type="project" value="UniProtKB"/>
</dbReference>
<dbReference type="GO" id="GO:0010543">
    <property type="term" value="P:regulation of platelet activation"/>
    <property type="evidence" value="ECO:0007669"/>
    <property type="project" value="TreeGrafter"/>
</dbReference>
<dbReference type="GO" id="GO:0002292">
    <property type="term" value="P:T cell differentiation involved in immune response"/>
    <property type="evidence" value="ECO:0007669"/>
    <property type="project" value="TreeGrafter"/>
</dbReference>
<dbReference type="InterPro" id="IPR021663">
    <property type="entry name" value="CD3_zeta/IgE_Fc_rcpt_gamma"/>
</dbReference>
<dbReference type="InterPro" id="IPR042340">
    <property type="entry name" value="FCER1G"/>
</dbReference>
<dbReference type="InterPro" id="IPR003110">
    <property type="entry name" value="Phos_immunorcpt_sig_ITAM"/>
</dbReference>
<dbReference type="PANTHER" id="PTHR16803">
    <property type="entry name" value="HIGH AFFINITY IMMUNOGLOBULIN EPSILON RECEPTOR GAMMA-SUBUNIT"/>
    <property type="match status" value="1"/>
</dbReference>
<dbReference type="PANTHER" id="PTHR16803:SF0">
    <property type="entry name" value="HIGH AFFINITY IMMUNOGLOBULIN EPSILON RECEPTOR SUBUNIT GAMMA"/>
    <property type="match status" value="1"/>
</dbReference>
<dbReference type="Pfam" id="PF02189">
    <property type="entry name" value="ITAM"/>
    <property type="match status" value="1"/>
</dbReference>
<dbReference type="Pfam" id="PF11628">
    <property type="entry name" value="TCR_zetazeta"/>
    <property type="match status" value="1"/>
</dbReference>
<dbReference type="SMART" id="SM00077">
    <property type="entry name" value="ITAM"/>
    <property type="match status" value="1"/>
</dbReference>
<dbReference type="PROSITE" id="PS51055">
    <property type="entry name" value="ITAM_1"/>
    <property type="match status" value="1"/>
</dbReference>
<keyword id="KW-1003">Cell membrane</keyword>
<keyword id="KW-1015">Disulfide bond</keyword>
<keyword id="KW-0389">IgE-binding protein</keyword>
<keyword id="KW-0391">Immunity</keyword>
<keyword id="KW-0399">Innate immunity</keyword>
<keyword id="KW-0472">Membrane</keyword>
<keyword id="KW-0597">Phosphoprotein</keyword>
<keyword id="KW-0675">Receptor</keyword>
<keyword id="KW-1185">Reference proteome</keyword>
<keyword id="KW-0732">Signal</keyword>
<keyword id="KW-0812">Transmembrane</keyword>
<keyword id="KW-1133">Transmembrane helix</keyword>
<sequence length="86" mass="9637">MIPAVVLLLLLLVEQAAALGEPQLCYILDAILFLYGIVLTLLYCRLKIQVRKAAIASYEKSDGVYTGLSTRNQETYETLKHEKPPQ</sequence>
<accession>Q8SPW1</accession>
<reference key="1">
    <citation type="submission" date="2002-02" db="EMBL/GenBank/DDBJ databases">
        <title>Binding of human IgG to cynomolgus FcR.</title>
        <authorList>
            <person name="Namenuk A.K."/>
            <person name="Hong K."/>
            <person name="Meng Y.G."/>
            <person name="Shields R.L."/>
            <person name="Cromwell M.E.M."/>
            <person name="Presta L.G."/>
        </authorList>
    </citation>
    <scope>NUCLEOTIDE SEQUENCE [MRNA]</scope>
    <source>
        <tissue>Spleen</tissue>
    </source>
</reference>
<protein>
    <recommendedName>
        <fullName>High affinity immunoglobulin epsilon receptor subunit gamma</fullName>
    </recommendedName>
    <alternativeName>
        <fullName>Fc receptor gamma-chain</fullName>
        <shortName>FcRgamma</shortName>
    </alternativeName>
    <alternativeName>
        <fullName>Fc-epsilon RI-gamma</fullName>
    </alternativeName>
    <alternativeName>
        <fullName>IgE Fc receptor subunit gamma</fullName>
        <shortName>FceRI gamma</shortName>
    </alternativeName>
</protein>
<name>FCERG_MACFA</name>
<comment type="function">
    <text evidence="3">Adapter protein containing an immunoreceptor tyrosine-based activation motif (ITAM) that transduces activation signals from various immunoreceptors. As a component of the high-affinity immunoglobulin E (IgE) receptor, mediates allergic inflammatory signaling in mast cells. As a constitutive component of interleukin-3 receptor complex, selectively mediates interleukin 4/IL4 production by basophils priming T-cells toward effector T-helper 2 subset. Associates with pattern recognition receptors CLEC4D and CLEC4E to form a functional signaling complex in myeloid cells. Binding of mycobacterial trehalose 6,6'-dimycolate (TDM) to this receptor complex leads to phosphorylation of ITAM, triggering activation of SYK, CARD9 and NF-kappa-B, consequently driving maturation of antigen-presenting cells and shaping antigen-specific priming of T-cells toward effector T-helper 1 and T-helper 17 cell subtypes. May function cooperatively with other activating receptors. Functionally linked to integrin beta-2/ITGB2-mediated neutrophil activation. Also involved in integrin alpha-2/ITGA2-mediated platelet activation.</text>
</comment>
<comment type="subunit">
    <text evidence="2 3 4">IgE Fc receptor is a tetramer of an alpha chain, a beta chain, and two disulfide linked gamma chains. Associates with FCGR1A; forms a functional signaling complex (By similarity). The signaling subunit of immunoglobulin gamma (IgG) Fc receptor complex. As a homodimer or a heterodimer of CD247 and FCER1G, associates with the ligand binding subunit FCGR3A to form a functional receptor complex (By similarity). Associates with CLEC6A. Interacts with CLEC4E. Interacts (via ITAM domain) with SYK (via SH2 domains); activates SYK, enabling integrin-mediated activation of neutrophils and macrophages (By similarity). Interacts with CSF2RB and recruits SYK in response to IL3 stimulation; this interaction is direct (By similarity). Interacts with CD300LH; the interaction may be indirect. Interacts with CD300LD (By similarity). Interacts with TARM1 (By similarity).</text>
</comment>
<comment type="subcellular location">
    <subcellularLocation>
        <location evidence="1">Cell membrane</location>
        <topology evidence="1">Single-pass type I membrane protein</topology>
    </subcellularLocation>
</comment>
<comment type="similarity">
    <text evidence="7">Belongs to the CD3Z/FCER1G family.</text>
</comment>
<feature type="signal peptide" evidence="5">
    <location>
        <begin position="1"/>
        <end position="18"/>
    </location>
</feature>
<feature type="chain" id="PRO_0000016502" description="High affinity immunoglobulin epsilon receptor subunit gamma">
    <location>
        <begin position="19"/>
        <end position="86"/>
    </location>
</feature>
<feature type="topological domain" description="Extracellular" evidence="5">
    <location>
        <begin position="19"/>
        <end position="23"/>
    </location>
</feature>
<feature type="transmembrane region" description="Helical" evidence="5">
    <location>
        <begin position="24"/>
        <end position="44"/>
    </location>
</feature>
<feature type="topological domain" description="Cytoplasmic" evidence="5">
    <location>
        <begin position="45"/>
        <end position="86"/>
    </location>
</feature>
<feature type="domain" description="ITAM" evidence="6">
    <location>
        <begin position="54"/>
        <end position="82"/>
    </location>
</feature>
<feature type="modified residue" description="Phosphotyrosine" evidence="3 6">
    <location>
        <position position="65"/>
    </location>
</feature>
<feature type="modified residue" description="Phosphoserine" evidence="4">
    <location>
        <position position="69"/>
    </location>
</feature>
<feature type="modified residue" description="Phosphotyrosine" evidence="3 6">
    <location>
        <position position="76"/>
    </location>
</feature>
<feature type="modified residue" description="Phosphothreonine" evidence="3">
    <location>
        <position position="78"/>
    </location>
</feature>
<feature type="disulfide bond" description="Interchain" evidence="1">
    <location>
        <position position="25"/>
    </location>
</feature>
<organism>
    <name type="scientific">Macaca fascicularis</name>
    <name type="common">Crab-eating macaque</name>
    <name type="synonym">Cynomolgus monkey</name>
    <dbReference type="NCBI Taxonomy" id="9541"/>
    <lineage>
        <taxon>Eukaryota</taxon>
        <taxon>Metazoa</taxon>
        <taxon>Chordata</taxon>
        <taxon>Craniata</taxon>
        <taxon>Vertebrata</taxon>
        <taxon>Euteleostomi</taxon>
        <taxon>Mammalia</taxon>
        <taxon>Eutheria</taxon>
        <taxon>Euarchontoglires</taxon>
        <taxon>Primates</taxon>
        <taxon>Haplorrhini</taxon>
        <taxon>Catarrhini</taxon>
        <taxon>Cercopithecidae</taxon>
        <taxon>Cercopithecinae</taxon>
        <taxon>Macaca</taxon>
    </lineage>
</organism>